<feature type="chain" id="PRO_0000053413" description="UPF0248 protein MJ1316">
    <location>
        <begin position="1"/>
        <end position="80"/>
    </location>
</feature>
<evidence type="ECO:0000255" key="1">
    <source>
        <dbReference type="HAMAP-Rule" id="MF_01245"/>
    </source>
</evidence>
<accession>Q58712</accession>
<protein>
    <recommendedName>
        <fullName evidence="1">UPF0248 protein MJ1316</fullName>
    </recommendedName>
</protein>
<keyword id="KW-1185">Reference proteome</keyword>
<organism>
    <name type="scientific">Methanocaldococcus jannaschii (strain ATCC 43067 / DSM 2661 / JAL-1 / JCM 10045 / NBRC 100440)</name>
    <name type="common">Methanococcus jannaschii</name>
    <dbReference type="NCBI Taxonomy" id="243232"/>
    <lineage>
        <taxon>Archaea</taxon>
        <taxon>Methanobacteriati</taxon>
        <taxon>Methanobacteriota</taxon>
        <taxon>Methanomada group</taxon>
        <taxon>Methanococci</taxon>
        <taxon>Methanococcales</taxon>
        <taxon>Methanocaldococcaceae</taxon>
        <taxon>Methanocaldococcus</taxon>
    </lineage>
</organism>
<dbReference type="EMBL" id="L77117">
    <property type="protein sequence ID" value="AAB99323.1"/>
    <property type="molecule type" value="Genomic_DNA"/>
</dbReference>
<dbReference type="PIR" id="C64464">
    <property type="entry name" value="C64464"/>
</dbReference>
<dbReference type="STRING" id="243232.MJ_1316"/>
<dbReference type="PaxDb" id="243232-MJ_1316"/>
<dbReference type="EnsemblBacteria" id="AAB99323">
    <property type="protein sequence ID" value="AAB99323"/>
    <property type="gene ID" value="MJ_1316"/>
</dbReference>
<dbReference type="KEGG" id="mja:MJ_1316"/>
<dbReference type="eggNOG" id="arCOG01302">
    <property type="taxonomic scope" value="Archaea"/>
</dbReference>
<dbReference type="HOGENOM" id="CLU_172276_3_1_2"/>
<dbReference type="InParanoid" id="Q58712"/>
<dbReference type="PhylomeDB" id="Q58712"/>
<dbReference type="Proteomes" id="UP000000805">
    <property type="component" value="Chromosome"/>
</dbReference>
<dbReference type="HAMAP" id="MF_01245">
    <property type="entry name" value="UPF0248"/>
    <property type="match status" value="1"/>
</dbReference>
<dbReference type="InterPro" id="IPR040459">
    <property type="entry name" value="MJ1316"/>
</dbReference>
<dbReference type="InterPro" id="IPR007547">
    <property type="entry name" value="UPF0248"/>
</dbReference>
<dbReference type="NCBIfam" id="NF003272">
    <property type="entry name" value="PRK04257.1"/>
    <property type="match status" value="1"/>
</dbReference>
<dbReference type="Pfam" id="PF04457">
    <property type="entry name" value="MJ1316"/>
    <property type="match status" value="1"/>
</dbReference>
<sequence length="80" mass="9683">MGIFMLKEILNKIFWHPDYKREDFEVVILHRGAEENKKAISLDDVELKGNYLIYFDTYIPLHRILEIRNKKTGEILYKKK</sequence>
<gene>
    <name type="ordered locus">MJ1316</name>
</gene>
<proteinExistence type="inferred from homology"/>
<comment type="similarity">
    <text evidence="1">Belongs to the UPF0248 family.</text>
</comment>
<reference key="1">
    <citation type="journal article" date="1996" name="Science">
        <title>Complete genome sequence of the methanogenic archaeon, Methanococcus jannaschii.</title>
        <authorList>
            <person name="Bult C.J."/>
            <person name="White O."/>
            <person name="Olsen G.J."/>
            <person name="Zhou L."/>
            <person name="Fleischmann R.D."/>
            <person name="Sutton G.G."/>
            <person name="Blake J.A."/>
            <person name="FitzGerald L.M."/>
            <person name="Clayton R.A."/>
            <person name="Gocayne J.D."/>
            <person name="Kerlavage A.R."/>
            <person name="Dougherty B.A."/>
            <person name="Tomb J.-F."/>
            <person name="Adams M.D."/>
            <person name="Reich C.I."/>
            <person name="Overbeek R."/>
            <person name="Kirkness E.F."/>
            <person name="Weinstock K.G."/>
            <person name="Merrick J.M."/>
            <person name="Glodek A."/>
            <person name="Scott J.L."/>
            <person name="Geoghagen N.S.M."/>
            <person name="Weidman J.F."/>
            <person name="Fuhrmann J.L."/>
            <person name="Nguyen D."/>
            <person name="Utterback T.R."/>
            <person name="Kelley J.M."/>
            <person name="Peterson J.D."/>
            <person name="Sadow P.W."/>
            <person name="Hanna M.C."/>
            <person name="Cotton M.D."/>
            <person name="Roberts K.M."/>
            <person name="Hurst M.A."/>
            <person name="Kaine B.P."/>
            <person name="Borodovsky M."/>
            <person name="Klenk H.-P."/>
            <person name="Fraser C.M."/>
            <person name="Smith H.O."/>
            <person name="Woese C.R."/>
            <person name="Venter J.C."/>
        </authorList>
    </citation>
    <scope>NUCLEOTIDE SEQUENCE [LARGE SCALE GENOMIC DNA]</scope>
    <source>
        <strain>ATCC 43067 / DSM 2661 / JAL-1 / JCM 10045 / NBRC 100440</strain>
    </source>
</reference>
<name>Y1316_METJA</name>